<name>NADA_CHLT3</name>
<evidence type="ECO:0000255" key="1">
    <source>
        <dbReference type="HAMAP-Rule" id="MF_00568"/>
    </source>
</evidence>
<reference key="1">
    <citation type="submission" date="2008-06" db="EMBL/GenBank/DDBJ databases">
        <title>Complete sequence of Chloroherpeton thalassium ATCC 35110.</title>
        <authorList>
            <consortium name="US DOE Joint Genome Institute"/>
            <person name="Lucas S."/>
            <person name="Copeland A."/>
            <person name="Lapidus A."/>
            <person name="Glavina del Rio T."/>
            <person name="Dalin E."/>
            <person name="Tice H."/>
            <person name="Bruce D."/>
            <person name="Goodwin L."/>
            <person name="Pitluck S."/>
            <person name="Schmutz J."/>
            <person name="Larimer F."/>
            <person name="Land M."/>
            <person name="Hauser L."/>
            <person name="Kyrpides N."/>
            <person name="Mikhailova N."/>
            <person name="Liu Z."/>
            <person name="Li T."/>
            <person name="Zhao F."/>
            <person name="Overmann J."/>
            <person name="Bryant D.A."/>
            <person name="Richardson P."/>
        </authorList>
    </citation>
    <scope>NUCLEOTIDE SEQUENCE [LARGE SCALE GENOMIC DNA]</scope>
    <source>
        <strain>ATCC 35110 / GB-78</strain>
    </source>
</reference>
<accession>B3QS01</accession>
<comment type="function">
    <text evidence="1">Catalyzes the condensation of iminoaspartate with dihydroxyacetone phosphate to form quinolinate.</text>
</comment>
<comment type="catalytic activity">
    <reaction evidence="1">
        <text>iminosuccinate + dihydroxyacetone phosphate = quinolinate + phosphate + 2 H2O + H(+)</text>
        <dbReference type="Rhea" id="RHEA:25888"/>
        <dbReference type="ChEBI" id="CHEBI:15377"/>
        <dbReference type="ChEBI" id="CHEBI:15378"/>
        <dbReference type="ChEBI" id="CHEBI:29959"/>
        <dbReference type="ChEBI" id="CHEBI:43474"/>
        <dbReference type="ChEBI" id="CHEBI:57642"/>
        <dbReference type="ChEBI" id="CHEBI:77875"/>
        <dbReference type="EC" id="2.5.1.72"/>
    </reaction>
    <physiologicalReaction direction="left-to-right" evidence="1">
        <dbReference type="Rhea" id="RHEA:25889"/>
    </physiologicalReaction>
</comment>
<comment type="cofactor">
    <cofactor evidence="1">
        <name>[4Fe-4S] cluster</name>
        <dbReference type="ChEBI" id="CHEBI:49883"/>
    </cofactor>
    <text evidence="1">Binds 1 [4Fe-4S] cluster per subunit.</text>
</comment>
<comment type="pathway">
    <text evidence="1">Cofactor biosynthesis; NAD(+) biosynthesis; quinolinate from iminoaspartate: step 1/1.</text>
</comment>
<comment type="subcellular location">
    <subcellularLocation>
        <location evidence="1">Cytoplasm</location>
    </subcellularLocation>
</comment>
<comment type="similarity">
    <text evidence="1">Belongs to the quinolinate synthase family. Type 2 subfamily.</text>
</comment>
<dbReference type="EC" id="2.5.1.72" evidence="1"/>
<dbReference type="EMBL" id="CP001100">
    <property type="protein sequence ID" value="ACF13946.1"/>
    <property type="molecule type" value="Genomic_DNA"/>
</dbReference>
<dbReference type="RefSeq" id="WP_012500030.1">
    <property type="nucleotide sequence ID" value="NC_011026.1"/>
</dbReference>
<dbReference type="SMR" id="B3QS01"/>
<dbReference type="STRING" id="517418.Ctha_1487"/>
<dbReference type="KEGG" id="cts:Ctha_1487"/>
<dbReference type="eggNOG" id="COG0379">
    <property type="taxonomic scope" value="Bacteria"/>
</dbReference>
<dbReference type="HOGENOM" id="CLU_047382_1_0_10"/>
<dbReference type="OrthoDB" id="9801204at2"/>
<dbReference type="UniPathway" id="UPA00253">
    <property type="reaction ID" value="UER00327"/>
</dbReference>
<dbReference type="Proteomes" id="UP000001208">
    <property type="component" value="Chromosome"/>
</dbReference>
<dbReference type="GO" id="GO:0005829">
    <property type="term" value="C:cytosol"/>
    <property type="evidence" value="ECO:0007669"/>
    <property type="project" value="TreeGrafter"/>
</dbReference>
<dbReference type="GO" id="GO:0051539">
    <property type="term" value="F:4 iron, 4 sulfur cluster binding"/>
    <property type="evidence" value="ECO:0007669"/>
    <property type="project" value="UniProtKB-KW"/>
</dbReference>
<dbReference type="GO" id="GO:0046872">
    <property type="term" value="F:metal ion binding"/>
    <property type="evidence" value="ECO:0007669"/>
    <property type="project" value="UniProtKB-KW"/>
</dbReference>
<dbReference type="GO" id="GO:0008987">
    <property type="term" value="F:quinolinate synthetase A activity"/>
    <property type="evidence" value="ECO:0007669"/>
    <property type="project" value="UniProtKB-UniRule"/>
</dbReference>
<dbReference type="GO" id="GO:0034628">
    <property type="term" value="P:'de novo' NAD biosynthetic process from L-aspartate"/>
    <property type="evidence" value="ECO:0007669"/>
    <property type="project" value="TreeGrafter"/>
</dbReference>
<dbReference type="FunFam" id="3.40.50.10800:FF:000003">
    <property type="entry name" value="Quinolinate synthase A"/>
    <property type="match status" value="1"/>
</dbReference>
<dbReference type="Gene3D" id="3.40.50.10800">
    <property type="entry name" value="NadA-like"/>
    <property type="match status" value="3"/>
</dbReference>
<dbReference type="HAMAP" id="MF_00568">
    <property type="entry name" value="NadA_type2"/>
    <property type="match status" value="1"/>
</dbReference>
<dbReference type="InterPro" id="IPR003473">
    <property type="entry name" value="NadA"/>
</dbReference>
<dbReference type="InterPro" id="IPR036094">
    <property type="entry name" value="NadA_sf"/>
</dbReference>
<dbReference type="InterPro" id="IPR023066">
    <property type="entry name" value="Quinolinate_synth_type2"/>
</dbReference>
<dbReference type="NCBIfam" id="TIGR00550">
    <property type="entry name" value="nadA"/>
    <property type="match status" value="1"/>
</dbReference>
<dbReference type="NCBIfam" id="NF006878">
    <property type="entry name" value="PRK09375.1-2"/>
    <property type="match status" value="1"/>
</dbReference>
<dbReference type="PANTHER" id="PTHR30573:SF0">
    <property type="entry name" value="QUINOLINATE SYNTHASE, CHLOROPLASTIC"/>
    <property type="match status" value="1"/>
</dbReference>
<dbReference type="PANTHER" id="PTHR30573">
    <property type="entry name" value="QUINOLINATE SYNTHETASE A"/>
    <property type="match status" value="1"/>
</dbReference>
<dbReference type="Pfam" id="PF02445">
    <property type="entry name" value="NadA"/>
    <property type="match status" value="1"/>
</dbReference>
<dbReference type="SUPFAM" id="SSF142754">
    <property type="entry name" value="NadA-like"/>
    <property type="match status" value="1"/>
</dbReference>
<gene>
    <name evidence="1" type="primary">nadA</name>
    <name type="ordered locus">Ctha_1487</name>
</gene>
<sequence>MSKAEIEKEPLNLSQLDLFEEIEKLKKELNAVVLAHYYQEPDIQDVADVLGDSLQLAREAQKTDAEVIVFAGVHFMAETAKILNPNKQVLLPDLEAGCSLADSCPPNLFRHFKAQHPDAIVISYINCSAEIKALSDIICTSSNAMHLVEQIPKEQKIIFAPDKNLGGYLMKKIGREMILWQGSCHVHEIFSEKKLIGLKVRYPGAEVLAHPECESVVLRHADFIGSTKAMLDYSVASDKKEFIVVTESGLIHEMQKRSPKKLFVPAPSTQETCACNECPHMRLNTLEKLYLCMKNRTPEITMSEDLRLAALKPIERMLELSK</sequence>
<feature type="chain" id="PRO_1000129434" description="Quinolinate synthase">
    <location>
        <begin position="1"/>
        <end position="322"/>
    </location>
</feature>
<feature type="binding site" evidence="1">
    <location>
        <position position="36"/>
    </location>
    <ligand>
        <name>iminosuccinate</name>
        <dbReference type="ChEBI" id="CHEBI:77875"/>
    </ligand>
</feature>
<feature type="binding site" evidence="1">
    <location>
        <position position="53"/>
    </location>
    <ligand>
        <name>iminosuccinate</name>
        <dbReference type="ChEBI" id="CHEBI:77875"/>
    </ligand>
</feature>
<feature type="binding site" evidence="1">
    <location>
        <position position="98"/>
    </location>
    <ligand>
        <name>[4Fe-4S] cluster</name>
        <dbReference type="ChEBI" id="CHEBI:49883"/>
    </ligand>
</feature>
<feature type="binding site" evidence="1">
    <location>
        <begin position="124"/>
        <end position="126"/>
    </location>
    <ligand>
        <name>iminosuccinate</name>
        <dbReference type="ChEBI" id="CHEBI:77875"/>
    </ligand>
</feature>
<feature type="binding site" evidence="1">
    <location>
        <position position="141"/>
    </location>
    <ligand>
        <name>iminosuccinate</name>
        <dbReference type="ChEBI" id="CHEBI:77875"/>
    </ligand>
</feature>
<feature type="binding site" evidence="1">
    <location>
        <position position="184"/>
    </location>
    <ligand>
        <name>[4Fe-4S] cluster</name>
        <dbReference type="ChEBI" id="CHEBI:49883"/>
    </ligand>
</feature>
<feature type="binding site" evidence="1">
    <location>
        <begin position="210"/>
        <end position="212"/>
    </location>
    <ligand>
        <name>iminosuccinate</name>
        <dbReference type="ChEBI" id="CHEBI:77875"/>
    </ligand>
</feature>
<feature type="binding site" evidence="1">
    <location>
        <position position="227"/>
    </location>
    <ligand>
        <name>iminosuccinate</name>
        <dbReference type="ChEBI" id="CHEBI:77875"/>
    </ligand>
</feature>
<feature type="binding site" evidence="1">
    <location>
        <position position="278"/>
    </location>
    <ligand>
        <name>[4Fe-4S] cluster</name>
        <dbReference type="ChEBI" id="CHEBI:49883"/>
    </ligand>
</feature>
<organism>
    <name type="scientific">Chloroherpeton thalassium (strain ATCC 35110 / GB-78)</name>
    <dbReference type="NCBI Taxonomy" id="517418"/>
    <lineage>
        <taxon>Bacteria</taxon>
        <taxon>Pseudomonadati</taxon>
        <taxon>Chlorobiota</taxon>
        <taxon>Chlorobiia</taxon>
        <taxon>Chlorobiales</taxon>
        <taxon>Chloroherpetonaceae</taxon>
        <taxon>Chloroherpeton</taxon>
    </lineage>
</organism>
<proteinExistence type="inferred from homology"/>
<protein>
    <recommendedName>
        <fullName evidence="1">Quinolinate synthase</fullName>
        <ecNumber evidence="1">2.5.1.72</ecNumber>
    </recommendedName>
</protein>
<keyword id="KW-0004">4Fe-4S</keyword>
<keyword id="KW-0963">Cytoplasm</keyword>
<keyword id="KW-0408">Iron</keyword>
<keyword id="KW-0411">Iron-sulfur</keyword>
<keyword id="KW-0479">Metal-binding</keyword>
<keyword id="KW-0662">Pyridine nucleotide biosynthesis</keyword>
<keyword id="KW-1185">Reference proteome</keyword>
<keyword id="KW-0808">Transferase</keyword>